<comment type="subcellular location">
    <subcellularLocation>
        <location evidence="1">Cell membrane</location>
        <topology evidence="1">Multi-pass membrane protein</topology>
    </subcellularLocation>
</comment>
<comment type="similarity">
    <text evidence="1">Belongs to the UPF0756 family.</text>
</comment>
<accession>Q039H8</accession>
<name>Y1366_LACP3</name>
<evidence type="ECO:0000255" key="1">
    <source>
        <dbReference type="HAMAP-Rule" id="MF_01874"/>
    </source>
</evidence>
<sequence>MESWLFLLGILAIAIVGKNKSLIIGVSAVMVLKLIPQTQNFLKLLQTQGINWGVTVISAAIMVPIATGEIGFKELLNVIKSPAGWIAIGCGVLVAVLSAKGVGLLAMSPEMTVALVFGTIIGVVFLKGIAAGPVIASGLTYVILTVFNLVPGH</sequence>
<reference key="1">
    <citation type="journal article" date="2006" name="Proc. Natl. Acad. Sci. U.S.A.">
        <title>Comparative genomics of the lactic acid bacteria.</title>
        <authorList>
            <person name="Makarova K.S."/>
            <person name="Slesarev A."/>
            <person name="Wolf Y.I."/>
            <person name="Sorokin A."/>
            <person name="Mirkin B."/>
            <person name="Koonin E.V."/>
            <person name="Pavlov A."/>
            <person name="Pavlova N."/>
            <person name="Karamychev V."/>
            <person name="Polouchine N."/>
            <person name="Shakhova V."/>
            <person name="Grigoriev I."/>
            <person name="Lou Y."/>
            <person name="Rohksar D."/>
            <person name="Lucas S."/>
            <person name="Huang K."/>
            <person name="Goodstein D.M."/>
            <person name="Hawkins T."/>
            <person name="Plengvidhya V."/>
            <person name="Welker D."/>
            <person name="Hughes J."/>
            <person name="Goh Y."/>
            <person name="Benson A."/>
            <person name="Baldwin K."/>
            <person name="Lee J.-H."/>
            <person name="Diaz-Muniz I."/>
            <person name="Dosti B."/>
            <person name="Smeianov V."/>
            <person name="Wechter W."/>
            <person name="Barabote R."/>
            <person name="Lorca G."/>
            <person name="Altermann E."/>
            <person name="Barrangou R."/>
            <person name="Ganesan B."/>
            <person name="Xie Y."/>
            <person name="Rawsthorne H."/>
            <person name="Tamir D."/>
            <person name="Parker C."/>
            <person name="Breidt F."/>
            <person name="Broadbent J.R."/>
            <person name="Hutkins R."/>
            <person name="O'Sullivan D."/>
            <person name="Steele J."/>
            <person name="Unlu G."/>
            <person name="Saier M.H. Jr."/>
            <person name="Klaenhammer T."/>
            <person name="Richardson P."/>
            <person name="Kozyavkin S."/>
            <person name="Weimer B.C."/>
            <person name="Mills D.A."/>
        </authorList>
    </citation>
    <scope>NUCLEOTIDE SEQUENCE [LARGE SCALE GENOMIC DNA]</scope>
    <source>
        <strain>ATCC 334 / BCRC 17002 / CCUG 31169 / CIP 107868 / KCTC 3260 / NRRL B-441</strain>
    </source>
</reference>
<protein>
    <recommendedName>
        <fullName evidence="1">UPF0756 membrane protein LSEI_1366</fullName>
    </recommendedName>
</protein>
<dbReference type="EMBL" id="CP000423">
    <property type="protein sequence ID" value="ABJ70144.1"/>
    <property type="molecule type" value="Genomic_DNA"/>
</dbReference>
<dbReference type="RefSeq" id="WP_003565333.1">
    <property type="nucleotide sequence ID" value="NC_008526.1"/>
</dbReference>
<dbReference type="RefSeq" id="YP_806586.1">
    <property type="nucleotide sequence ID" value="NC_008526.1"/>
</dbReference>
<dbReference type="STRING" id="321967.LSEI_1366"/>
<dbReference type="PaxDb" id="321967-LSEI_1366"/>
<dbReference type="KEGG" id="lca:LSEI_1366"/>
<dbReference type="PATRIC" id="fig|321967.11.peg.1345"/>
<dbReference type="HOGENOM" id="CLU_125889_1_0_9"/>
<dbReference type="Proteomes" id="UP000001651">
    <property type="component" value="Chromosome"/>
</dbReference>
<dbReference type="GO" id="GO:0005886">
    <property type="term" value="C:plasma membrane"/>
    <property type="evidence" value="ECO:0007669"/>
    <property type="project" value="UniProtKB-SubCell"/>
</dbReference>
<dbReference type="HAMAP" id="MF_01874">
    <property type="entry name" value="UPF0756"/>
    <property type="match status" value="1"/>
</dbReference>
<dbReference type="InterPro" id="IPR007382">
    <property type="entry name" value="UPF0756_TM"/>
</dbReference>
<dbReference type="PANTHER" id="PTHR38452">
    <property type="entry name" value="UPF0756 MEMBRANE PROTEIN YEAL"/>
    <property type="match status" value="1"/>
</dbReference>
<dbReference type="PANTHER" id="PTHR38452:SF1">
    <property type="entry name" value="UPF0756 MEMBRANE PROTEIN YEAL"/>
    <property type="match status" value="1"/>
</dbReference>
<dbReference type="Pfam" id="PF04284">
    <property type="entry name" value="DUF441"/>
    <property type="match status" value="1"/>
</dbReference>
<organism>
    <name type="scientific">Lacticaseibacillus paracasei (strain ATCC 334 / BCRC 17002 / CCUG 31169 / CIP 107868 / KCTC 3260 / NRRL B-441)</name>
    <name type="common">Lactobacillus paracasei</name>
    <dbReference type="NCBI Taxonomy" id="321967"/>
    <lineage>
        <taxon>Bacteria</taxon>
        <taxon>Bacillati</taxon>
        <taxon>Bacillota</taxon>
        <taxon>Bacilli</taxon>
        <taxon>Lactobacillales</taxon>
        <taxon>Lactobacillaceae</taxon>
        <taxon>Lacticaseibacillus</taxon>
    </lineage>
</organism>
<feature type="chain" id="PRO_0000388892" description="UPF0756 membrane protein LSEI_1366">
    <location>
        <begin position="1"/>
        <end position="153"/>
    </location>
</feature>
<feature type="transmembrane region" description="Helical" evidence="1">
    <location>
        <begin position="4"/>
        <end position="24"/>
    </location>
</feature>
<feature type="transmembrane region" description="Helical" evidence="1">
    <location>
        <begin position="52"/>
        <end position="72"/>
    </location>
</feature>
<feature type="transmembrane region" description="Helical" evidence="1">
    <location>
        <begin position="85"/>
        <end position="105"/>
    </location>
</feature>
<feature type="transmembrane region" description="Helical" evidence="1">
    <location>
        <begin position="115"/>
        <end position="135"/>
    </location>
</feature>
<keyword id="KW-1003">Cell membrane</keyword>
<keyword id="KW-0472">Membrane</keyword>
<keyword id="KW-1185">Reference proteome</keyword>
<keyword id="KW-0812">Transmembrane</keyword>
<keyword id="KW-1133">Transmembrane helix</keyword>
<proteinExistence type="inferred from homology"/>
<gene>
    <name type="ordered locus">LSEI_1366</name>
</gene>